<sequence length="447" mass="50511">MSHQRPEIFDNFAGAQVMTVDGEPQRDLNQARRIVLEMKEPLCRIPEDLRSLLSVTISVYCIETPSALVSTIIKNMPPEASIALVTGCRFLAVRDGPRGKTVTVLSTAFLSGLDESVTQQLFIHADTLLLTPEARSRISLLQDIIEDPPTSFETVGHIAHYNLREAHLPYRYFIGAVTCEKEPAITTVITKIDTVQSQYRTYNFELIGGVPRYDVKLVQDGITYSFNYTKVYWNSRLSHEHLSLAQHINQTICPNDLVLDGTCGIGPHALLLAKRFNFTNLICNDLNPDAYKSLKMNVRINKAENAITCFNEDVSSLLRRLLPETNLKAVIFSLPELSINLLQAMKGVPDIYCFLECFTRAPPHLAYYDLLLRCSESLLDTKVCTGIQQALSDIEKVAENKELIDLLIACYETFEVKEIRTVSTNKFMYRVTLKINEQKETVKVLKK</sequence>
<dbReference type="EC" id="2.1.1.228" evidence="1"/>
<dbReference type="EMBL" id="AACB02000002">
    <property type="protein sequence ID" value="EDO81986.1"/>
    <property type="molecule type" value="Genomic_DNA"/>
</dbReference>
<dbReference type="RefSeq" id="XP_001709660.1">
    <property type="nucleotide sequence ID" value="XM_001709608.1"/>
</dbReference>
<dbReference type="SMR" id="A8B4Q0"/>
<dbReference type="STRING" id="184922.A8B4Q0"/>
<dbReference type="EnsemblProtists" id="EDO81986">
    <property type="protein sequence ID" value="EDO81986"/>
    <property type="gene ID" value="GL50803_4164"/>
</dbReference>
<dbReference type="GeneID" id="5702584"/>
<dbReference type="KEGG" id="gla:GL50803_004164"/>
<dbReference type="VEuPathDB" id="GiardiaDB:GL50803_4164"/>
<dbReference type="HOGENOM" id="CLU_613160_0_0_1"/>
<dbReference type="OMA" id="CFLECFT"/>
<dbReference type="GO" id="GO:0005759">
    <property type="term" value="C:mitochondrial matrix"/>
    <property type="evidence" value="ECO:0007669"/>
    <property type="project" value="UniProtKB-SubCell"/>
</dbReference>
<dbReference type="GO" id="GO:0005634">
    <property type="term" value="C:nucleus"/>
    <property type="evidence" value="ECO:0007669"/>
    <property type="project" value="UniProtKB-SubCell"/>
</dbReference>
<dbReference type="GO" id="GO:0052906">
    <property type="term" value="F:tRNA (guanine(37)-N1)-methyltransferase activity"/>
    <property type="evidence" value="ECO:0007669"/>
    <property type="project" value="UniProtKB-UniRule"/>
</dbReference>
<dbReference type="GO" id="GO:0030488">
    <property type="term" value="P:tRNA methylation"/>
    <property type="evidence" value="ECO:0007669"/>
    <property type="project" value="UniProtKB-UniRule"/>
</dbReference>
<dbReference type="FunFam" id="3.30.300.110:FF:000001">
    <property type="entry name" value="tRNA (guanine(37)-N1)-methyltransferase"/>
    <property type="match status" value="1"/>
</dbReference>
<dbReference type="Gene3D" id="3.30.300.110">
    <property type="entry name" value="Met-10+ protein-like domains"/>
    <property type="match status" value="1"/>
</dbReference>
<dbReference type="Gene3D" id="3.40.50.150">
    <property type="entry name" value="Vaccinia Virus protein VP39"/>
    <property type="match status" value="1"/>
</dbReference>
<dbReference type="HAMAP" id="MF_03152">
    <property type="entry name" value="TRM5"/>
    <property type="match status" value="1"/>
</dbReference>
<dbReference type="InterPro" id="IPR030382">
    <property type="entry name" value="MeTrfase_TRM5/TYW2"/>
</dbReference>
<dbReference type="InterPro" id="IPR029063">
    <property type="entry name" value="SAM-dependent_MTases_sf"/>
</dbReference>
<dbReference type="InterPro" id="IPR056743">
    <property type="entry name" value="TRM5-TYW2-like_MTfase"/>
</dbReference>
<dbReference type="InterPro" id="IPR056744">
    <property type="entry name" value="TRM5/TYW2-like_N"/>
</dbReference>
<dbReference type="InterPro" id="IPR025792">
    <property type="entry name" value="tRNA_Gua_MeTrfase_euk"/>
</dbReference>
<dbReference type="PANTHER" id="PTHR23245:SF36">
    <property type="entry name" value="TRNA (GUANINE(37)-N1)-METHYLTRANSFERASE"/>
    <property type="match status" value="1"/>
</dbReference>
<dbReference type="PANTHER" id="PTHR23245">
    <property type="entry name" value="TRNA METHYLTRANSFERASE"/>
    <property type="match status" value="1"/>
</dbReference>
<dbReference type="Pfam" id="PF02475">
    <property type="entry name" value="TRM5-TYW2_MTfase"/>
    <property type="match status" value="1"/>
</dbReference>
<dbReference type="Pfam" id="PF25133">
    <property type="entry name" value="TYW2_N_2"/>
    <property type="match status" value="1"/>
</dbReference>
<dbReference type="SUPFAM" id="SSF53335">
    <property type="entry name" value="S-adenosyl-L-methionine-dependent methyltransferases"/>
    <property type="match status" value="1"/>
</dbReference>
<dbReference type="PROSITE" id="PS51684">
    <property type="entry name" value="SAM_MT_TRM5_TYW2"/>
    <property type="match status" value="1"/>
</dbReference>
<evidence type="ECO:0000255" key="1">
    <source>
        <dbReference type="HAMAP-Rule" id="MF_03152"/>
    </source>
</evidence>
<evidence type="ECO:0000305" key="2"/>
<feature type="chain" id="PRO_0000414157" description="tRNA (guanine(37)-N(1))-methyltransferase">
    <location>
        <begin position="1"/>
        <end position="447"/>
    </location>
</feature>
<feature type="binding site" evidence="1">
    <location>
        <position position="241"/>
    </location>
    <ligand>
        <name>S-adenosyl-L-methionine</name>
        <dbReference type="ChEBI" id="CHEBI:59789"/>
    </ligand>
</feature>
<feature type="binding site" evidence="1">
    <location>
        <begin position="285"/>
        <end position="286"/>
    </location>
    <ligand>
        <name>S-adenosyl-L-methionine</name>
        <dbReference type="ChEBI" id="CHEBI:59789"/>
    </ligand>
</feature>
<feature type="binding site" evidence="1">
    <location>
        <begin position="313"/>
        <end position="314"/>
    </location>
    <ligand>
        <name>S-adenosyl-L-methionine</name>
        <dbReference type="ChEBI" id="CHEBI:59789"/>
    </ligand>
</feature>
<keyword id="KW-0963">Cytoplasm</keyword>
<keyword id="KW-0489">Methyltransferase</keyword>
<keyword id="KW-0496">Mitochondrion</keyword>
<keyword id="KW-0539">Nucleus</keyword>
<keyword id="KW-0949">S-adenosyl-L-methionine</keyword>
<keyword id="KW-0808">Transferase</keyword>
<keyword id="KW-0819">tRNA processing</keyword>
<reference key="1">
    <citation type="journal article" date="2007" name="Science">
        <title>Genomic minimalism in the early diverging intestinal parasite Giardia lamblia.</title>
        <authorList>
            <person name="Morrison H.G."/>
            <person name="McArthur A.G."/>
            <person name="Gillin F.D."/>
            <person name="Aley S.B."/>
            <person name="Adam R.D."/>
            <person name="Olsen G.J."/>
            <person name="Best A.A."/>
            <person name="Cande W.Z."/>
            <person name="Chen F."/>
            <person name="Cipriano M.J."/>
            <person name="Davids B.J."/>
            <person name="Dawson S.C."/>
            <person name="Elmendorf H.G."/>
            <person name="Hehl A.B."/>
            <person name="Holder M.E."/>
            <person name="Huse S.M."/>
            <person name="Kim U.U."/>
            <person name="Lasek-Nesselquist E."/>
            <person name="Manning G."/>
            <person name="Nigam A."/>
            <person name="Nixon J.E.J."/>
            <person name="Palm D."/>
            <person name="Passamaneck N.E."/>
            <person name="Prabhu A."/>
            <person name="Reich C.I."/>
            <person name="Reiner D.S."/>
            <person name="Samuelson J."/>
            <person name="Svard S.G."/>
            <person name="Sogin M.L."/>
        </authorList>
    </citation>
    <scope>NUCLEOTIDE SEQUENCE [LARGE SCALE GENOMIC DNA]</scope>
    <source>
        <strain>ATCC 50803 / WB clone C6</strain>
    </source>
</reference>
<name>TRM5_GIAIC</name>
<protein>
    <recommendedName>
        <fullName evidence="1">tRNA (guanine(37)-N(1))-methyltransferase</fullName>
        <ecNumber evidence="1">2.1.1.228</ecNumber>
    </recommendedName>
    <alternativeName>
        <fullName evidence="1">M1G-methyltransferase</fullName>
    </alternativeName>
    <alternativeName>
        <fullName evidence="1">tRNA [GM37] methyltransferase</fullName>
    </alternativeName>
    <alternativeName>
        <fullName evidence="1">tRNA methyltransferase 5 homolog</fullName>
    </alternativeName>
</protein>
<comment type="function">
    <text evidence="1">Specifically methylates the N1 position of guanosine-37 in various cytoplasmic and mitochondrial tRNAs. Methylation is not dependent on the nature of the nucleoside 5' of the target nucleoside. This is the first step in the biosynthesis of wybutosine (yW), a modified base adjacent to the anticodon of tRNAs and required for accurate decoding.</text>
</comment>
<comment type="catalytic activity">
    <reaction evidence="1">
        <text>guanosine(37) in tRNA + S-adenosyl-L-methionine = N(1)-methylguanosine(37) in tRNA + S-adenosyl-L-homocysteine + H(+)</text>
        <dbReference type="Rhea" id="RHEA:36899"/>
        <dbReference type="Rhea" id="RHEA-COMP:10145"/>
        <dbReference type="Rhea" id="RHEA-COMP:10147"/>
        <dbReference type="ChEBI" id="CHEBI:15378"/>
        <dbReference type="ChEBI" id="CHEBI:57856"/>
        <dbReference type="ChEBI" id="CHEBI:59789"/>
        <dbReference type="ChEBI" id="CHEBI:73542"/>
        <dbReference type="ChEBI" id="CHEBI:74269"/>
        <dbReference type="EC" id="2.1.1.228"/>
    </reaction>
</comment>
<comment type="subunit">
    <text evidence="1">Monomer.</text>
</comment>
<comment type="subcellular location">
    <subcellularLocation>
        <location evidence="1">Mitochondrion matrix</location>
    </subcellularLocation>
    <subcellularLocation>
        <location evidence="1">Nucleus</location>
    </subcellularLocation>
    <subcellularLocation>
        <location evidence="1">Cytoplasm</location>
    </subcellularLocation>
    <text evidence="1">Predominantly in the mitochondria and in the nucleus.</text>
</comment>
<comment type="similarity">
    <text evidence="2">Belongs to the class I-like SAM-binding methyltransferase superfamily. TRM5/TYW2 family.</text>
</comment>
<gene>
    <name type="ORF">GL50803_4164</name>
</gene>
<proteinExistence type="inferred from homology"/>
<organism>
    <name type="scientific">Giardia intestinalis (strain ATCC 50803 / WB clone C6)</name>
    <name type="common">Giardia lamblia</name>
    <dbReference type="NCBI Taxonomy" id="184922"/>
    <lineage>
        <taxon>Eukaryota</taxon>
        <taxon>Metamonada</taxon>
        <taxon>Diplomonadida</taxon>
        <taxon>Hexamitidae</taxon>
        <taxon>Giardiinae</taxon>
        <taxon>Giardia</taxon>
    </lineage>
</organism>
<accession>A8B4Q0</accession>